<feature type="chain" id="PRO_1000192170" description="DNA mismatch repair protein MutL">
    <location>
        <begin position="1"/>
        <end position="572"/>
    </location>
</feature>
<protein>
    <recommendedName>
        <fullName evidence="1">DNA mismatch repair protein MutL</fullName>
    </recommendedName>
</protein>
<name>MUTL_DICTD</name>
<dbReference type="EMBL" id="CP001251">
    <property type="protein sequence ID" value="ACK42357.1"/>
    <property type="molecule type" value="Genomic_DNA"/>
</dbReference>
<dbReference type="RefSeq" id="WP_012583440.1">
    <property type="nucleotide sequence ID" value="NC_011661.1"/>
</dbReference>
<dbReference type="RefSeq" id="YP_002352971.1">
    <property type="nucleotide sequence ID" value="NC_011661.1"/>
</dbReference>
<dbReference type="SMR" id="B8E280"/>
<dbReference type="FunCoup" id="B8E280">
    <property type="interactions" value="337"/>
</dbReference>
<dbReference type="STRING" id="515635.Dtur_1078"/>
<dbReference type="EnsemblBacteria" id="ACK42357">
    <property type="protein sequence ID" value="ACK42357"/>
    <property type="gene ID" value="Dtur_1078"/>
</dbReference>
<dbReference type="KEGG" id="dtu:Dtur_1078"/>
<dbReference type="PATRIC" id="fig|515635.4.peg.1114"/>
<dbReference type="eggNOG" id="COG0323">
    <property type="taxonomic scope" value="Bacteria"/>
</dbReference>
<dbReference type="HOGENOM" id="CLU_004131_4_1_0"/>
<dbReference type="InParanoid" id="B8E280"/>
<dbReference type="OrthoDB" id="9763467at2"/>
<dbReference type="Proteomes" id="UP000007719">
    <property type="component" value="Chromosome"/>
</dbReference>
<dbReference type="GO" id="GO:0032300">
    <property type="term" value="C:mismatch repair complex"/>
    <property type="evidence" value="ECO:0000318"/>
    <property type="project" value="GO_Central"/>
</dbReference>
<dbReference type="GO" id="GO:0005524">
    <property type="term" value="F:ATP binding"/>
    <property type="evidence" value="ECO:0007669"/>
    <property type="project" value="InterPro"/>
</dbReference>
<dbReference type="GO" id="GO:0016887">
    <property type="term" value="F:ATP hydrolysis activity"/>
    <property type="evidence" value="ECO:0000318"/>
    <property type="project" value="GO_Central"/>
</dbReference>
<dbReference type="GO" id="GO:0140664">
    <property type="term" value="F:ATP-dependent DNA damage sensor activity"/>
    <property type="evidence" value="ECO:0007669"/>
    <property type="project" value="InterPro"/>
</dbReference>
<dbReference type="GO" id="GO:0030983">
    <property type="term" value="F:mismatched DNA binding"/>
    <property type="evidence" value="ECO:0007669"/>
    <property type="project" value="InterPro"/>
</dbReference>
<dbReference type="GO" id="GO:0006298">
    <property type="term" value="P:mismatch repair"/>
    <property type="evidence" value="ECO:0000318"/>
    <property type="project" value="GO_Central"/>
</dbReference>
<dbReference type="CDD" id="cd16926">
    <property type="entry name" value="HATPase_MutL-MLH-PMS-like"/>
    <property type="match status" value="1"/>
</dbReference>
<dbReference type="CDD" id="cd00782">
    <property type="entry name" value="MutL_Trans"/>
    <property type="match status" value="1"/>
</dbReference>
<dbReference type="FunFam" id="3.30.565.10:FF:000003">
    <property type="entry name" value="DNA mismatch repair endonuclease MutL"/>
    <property type="match status" value="1"/>
</dbReference>
<dbReference type="Gene3D" id="3.30.230.10">
    <property type="match status" value="1"/>
</dbReference>
<dbReference type="Gene3D" id="3.30.565.10">
    <property type="entry name" value="Histidine kinase-like ATPase, C-terminal domain"/>
    <property type="match status" value="1"/>
</dbReference>
<dbReference type="Gene3D" id="3.30.1540.20">
    <property type="entry name" value="MutL, C-terminal domain, dimerisation subdomain"/>
    <property type="match status" value="1"/>
</dbReference>
<dbReference type="Gene3D" id="3.30.1370.100">
    <property type="entry name" value="MutL, C-terminal domain, regulatory subdomain"/>
    <property type="match status" value="1"/>
</dbReference>
<dbReference type="HAMAP" id="MF_00149">
    <property type="entry name" value="DNA_mis_repair"/>
    <property type="match status" value="1"/>
</dbReference>
<dbReference type="InterPro" id="IPR014762">
    <property type="entry name" value="DNA_mismatch_repair_CS"/>
</dbReference>
<dbReference type="InterPro" id="IPR020667">
    <property type="entry name" value="DNA_mismatch_repair_MutL"/>
</dbReference>
<dbReference type="InterPro" id="IPR013507">
    <property type="entry name" value="DNA_mismatch_S5_2-like"/>
</dbReference>
<dbReference type="InterPro" id="IPR036890">
    <property type="entry name" value="HATPase_C_sf"/>
</dbReference>
<dbReference type="InterPro" id="IPR002099">
    <property type="entry name" value="MutL/Mlh/PMS"/>
</dbReference>
<dbReference type="InterPro" id="IPR038973">
    <property type="entry name" value="MutL/Mlh/Pms-like"/>
</dbReference>
<dbReference type="InterPro" id="IPR014790">
    <property type="entry name" value="MutL_C"/>
</dbReference>
<dbReference type="InterPro" id="IPR042120">
    <property type="entry name" value="MutL_C_dimsub"/>
</dbReference>
<dbReference type="InterPro" id="IPR042121">
    <property type="entry name" value="MutL_C_regsub"/>
</dbReference>
<dbReference type="InterPro" id="IPR037198">
    <property type="entry name" value="MutL_C_sf"/>
</dbReference>
<dbReference type="InterPro" id="IPR020568">
    <property type="entry name" value="Ribosomal_Su5_D2-typ_SF"/>
</dbReference>
<dbReference type="InterPro" id="IPR014721">
    <property type="entry name" value="Ribsml_uS5_D2-typ_fold_subgr"/>
</dbReference>
<dbReference type="NCBIfam" id="TIGR00585">
    <property type="entry name" value="mutl"/>
    <property type="match status" value="1"/>
</dbReference>
<dbReference type="PANTHER" id="PTHR10073">
    <property type="entry name" value="DNA MISMATCH REPAIR PROTEIN MLH, PMS, MUTL"/>
    <property type="match status" value="1"/>
</dbReference>
<dbReference type="PANTHER" id="PTHR10073:SF12">
    <property type="entry name" value="DNA MISMATCH REPAIR PROTEIN MLH1"/>
    <property type="match status" value="1"/>
</dbReference>
<dbReference type="Pfam" id="PF01119">
    <property type="entry name" value="DNA_mis_repair"/>
    <property type="match status" value="1"/>
</dbReference>
<dbReference type="Pfam" id="PF13589">
    <property type="entry name" value="HATPase_c_3"/>
    <property type="match status" value="1"/>
</dbReference>
<dbReference type="Pfam" id="PF08676">
    <property type="entry name" value="MutL_C"/>
    <property type="match status" value="1"/>
</dbReference>
<dbReference type="SMART" id="SM01340">
    <property type="entry name" value="DNA_mis_repair"/>
    <property type="match status" value="1"/>
</dbReference>
<dbReference type="SMART" id="SM00853">
    <property type="entry name" value="MutL_C"/>
    <property type="match status" value="1"/>
</dbReference>
<dbReference type="SUPFAM" id="SSF55874">
    <property type="entry name" value="ATPase domain of HSP90 chaperone/DNA topoisomerase II/histidine kinase"/>
    <property type="match status" value="1"/>
</dbReference>
<dbReference type="SUPFAM" id="SSF118116">
    <property type="entry name" value="DNA mismatch repair protein MutL"/>
    <property type="match status" value="1"/>
</dbReference>
<dbReference type="SUPFAM" id="SSF54211">
    <property type="entry name" value="Ribosomal protein S5 domain 2-like"/>
    <property type="match status" value="1"/>
</dbReference>
<dbReference type="PROSITE" id="PS00058">
    <property type="entry name" value="DNA_MISMATCH_REPAIR_1"/>
    <property type="match status" value="1"/>
</dbReference>
<gene>
    <name evidence="1" type="primary">mutL</name>
    <name type="ordered locus">Dtur_1078</name>
</gene>
<evidence type="ECO:0000255" key="1">
    <source>
        <dbReference type="HAMAP-Rule" id="MF_00149"/>
    </source>
</evidence>
<sequence>MGKVILLPEEIRNKIAAGEVIERPVSVVKELVENSIDAGAKRITVEFINGGETLISVIDDGEGMTKEDAILALNRFATSKIKTEEDLYNIKTLGFRGEALASIASVSKVEVRSKTETEDGVFIKVEGGVIQEINLWQGSKGTVIKVFDLFYNVPARRKFLKSKTTETNLIVDFVKRIAMAYPEISFQLIQDGKNKFITSGNGKLEDVVSLLFDIEIHNNLIFLQRKEGNYIIEGFISKPGKLISLKSQDYFYVNRRWVRNNIILQAIKEGYKNRLLEGYFPFSIVFLTLPYHEVDVNVHPTKREIKFEKEKEVYEFVSKAIKEALDSEDKRFFSGVKALEGKEHKNHVGIKTEKELLSLPMEFEHKSENKLSEDISEYISLKSGFRIVGQIFDNYIIVETKDRVYIIDQHAAHERIRYEELKKELSLGYLQNVEILFPLVIEVSEEEKELLNKHKDLLEKFAFSWEDFGPYHIRIIRVPYEFLKFDSKSIENLFQEIISDISEKDLSKLEDKIIKSMACHSAIRSGNILVREEMEVLINLIFERKIPLTCPHGRPYIWEISKEELERYFHRR</sequence>
<organism>
    <name type="scientific">Dictyoglomus turgidum (strain DSM 6724 / Z-1310)</name>
    <dbReference type="NCBI Taxonomy" id="515635"/>
    <lineage>
        <taxon>Bacteria</taxon>
        <taxon>Pseudomonadati</taxon>
        <taxon>Dictyoglomota</taxon>
        <taxon>Dictyoglomia</taxon>
        <taxon>Dictyoglomales</taxon>
        <taxon>Dictyoglomaceae</taxon>
        <taxon>Dictyoglomus</taxon>
    </lineage>
</organism>
<comment type="function">
    <text evidence="1">This protein is involved in the repair of mismatches in DNA. It is required for dam-dependent methyl-directed DNA mismatch repair. May act as a 'molecular matchmaker', a protein that promotes the formation of a stable complex between two or more DNA-binding proteins in an ATP-dependent manner without itself being part of a final effector complex.</text>
</comment>
<comment type="similarity">
    <text evidence="1">Belongs to the DNA mismatch repair MutL/HexB family.</text>
</comment>
<proteinExistence type="inferred from homology"/>
<accession>B8E280</accession>
<reference key="1">
    <citation type="journal article" date="2016" name="Front. Microbiol.">
        <title>The complete genome sequence of hyperthermophile Dictyoglomus turgidum DSM 6724 reveals a specialized carbohydrate fermentor.</title>
        <authorList>
            <person name="Brumm P.J."/>
            <person name="Gowda K."/>
            <person name="Robb F.T."/>
            <person name="Mead D.A."/>
        </authorList>
    </citation>
    <scope>NUCLEOTIDE SEQUENCE [LARGE SCALE GENOMIC DNA]</scope>
    <source>
        <strain>DSM 6724 / Z-1310</strain>
    </source>
</reference>
<keyword id="KW-0227">DNA damage</keyword>
<keyword id="KW-0234">DNA repair</keyword>
<keyword id="KW-1185">Reference proteome</keyword>